<proteinExistence type="inferred from homology"/>
<accession>M1L502</accession>
<feature type="chain" id="PRO_0000457639" description="Glutaredoxin-2">
    <location>
        <begin position="1"/>
        <end position="124"/>
    </location>
</feature>
<feature type="disulfide bond" description="Redox-active" evidence="1">
    <location>
        <begin position="13"/>
        <end position="16"/>
    </location>
</feature>
<sequence>MKNVLIIFGKPYCSICENVSEAVEELKSEYDILHVDILSFFLKDGDSSMLGDVKRGTLIGNFAAHLSNYIVSIFKYNPQTKQMAFVDINKSLDFTKTDKSLVNLEILKSEIEKATYGVWPPVTE</sequence>
<keyword id="KW-1015">Disulfide bond</keyword>
<keyword id="KW-0249">Electron transport</keyword>
<keyword id="KW-1035">Host cytoplasm</keyword>
<keyword id="KW-0676">Redox-active center</keyword>
<keyword id="KW-1185">Reference proteome</keyword>
<keyword id="KW-0813">Transport</keyword>
<comment type="function">
    <text evidence="1">Glutaredoxin necessary for virion morphogenesis and virus replication. Functions as a thiol-disulfide transfer protein between membrane-associated OPG128 and substrates OPG095 or OPG053. The complete pathway for formation of disulfide bonds in intracellular virion membrane proteins sequentially involves oxidation of OPG072, OPG128 and OPG088. Exhibit thioltransferase and dehydroascorbate reductase activities in vitro.</text>
</comment>
<comment type="subunit">
    <text evidence="1">Homodimer.</text>
</comment>
<comment type="subcellular location">
    <subcellularLocation>
        <location evidence="1">Host cytoplasm</location>
    </subcellularLocation>
</comment>
<comment type="induction">
    <text evidence="1">Expressed in the intermediate phase of the viral replicative cycle.</text>
</comment>
<comment type="similarity">
    <text evidence="2">Belongs to the glutaredoxin family.</text>
</comment>
<organismHost>
    <name type="scientific">Cynomys gunnisoni</name>
    <name type="common">Gunnison's prairie dog</name>
    <name type="synonym">Spermophilus gunnisoni</name>
    <dbReference type="NCBI Taxonomy" id="45479"/>
</organismHost>
<organismHost>
    <name type="scientific">Cynomys leucurus</name>
    <name type="common">White-tailed prairie dog</name>
    <dbReference type="NCBI Taxonomy" id="99825"/>
</organismHost>
<organismHost>
    <name type="scientific">Cynomys ludovicianus</name>
    <name type="common">Black-tailed prairie dog</name>
    <dbReference type="NCBI Taxonomy" id="45480"/>
</organismHost>
<organismHost>
    <name type="scientific">Cynomys mexicanus</name>
    <name type="common">Mexican prairie dog</name>
    <dbReference type="NCBI Taxonomy" id="99826"/>
</organismHost>
<organismHost>
    <name type="scientific">Cynomys parvidens</name>
    <name type="common">Utah prairie dog</name>
    <dbReference type="NCBI Taxonomy" id="99827"/>
</organismHost>
<organismHost>
    <name type="scientific">Gliridae</name>
    <name type="common">dormice</name>
    <dbReference type="NCBI Taxonomy" id="30650"/>
</organismHost>
<organismHost>
    <name type="scientific">Heliosciurus ruwenzorii</name>
    <name type="common">Ruwenzori sun squirrel</name>
    <dbReference type="NCBI Taxonomy" id="226685"/>
</organismHost>
<organismHost>
    <name type="scientific">Homo sapiens</name>
    <name type="common">Human</name>
    <dbReference type="NCBI Taxonomy" id="9606"/>
</organismHost>
<organismHost>
    <name type="scientific">Mus musculus</name>
    <name type="common">Mouse</name>
    <dbReference type="NCBI Taxonomy" id="10090"/>
</organismHost>
<organism>
    <name type="scientific">Monkeypox virus</name>
    <dbReference type="NCBI Taxonomy" id="10244"/>
    <lineage>
        <taxon>Viruses</taxon>
        <taxon>Varidnaviria</taxon>
        <taxon>Bamfordvirae</taxon>
        <taxon>Nucleocytoviricota</taxon>
        <taxon>Pokkesviricetes</taxon>
        <taxon>Chitovirales</taxon>
        <taxon>Poxviridae</taxon>
        <taxon>Chordopoxvirinae</taxon>
        <taxon>Orthopoxvirus</taxon>
    </lineage>
</organism>
<gene>
    <name type="primary">OPG088</name>
    <name type="ORF">MPXVgp073</name>
</gene>
<dbReference type="EMBL" id="KC257461">
    <property type="protein sequence ID" value="AGF36977.1"/>
    <property type="molecule type" value="Genomic_DNA"/>
</dbReference>
<dbReference type="EMBL" id="MT903340">
    <property type="protein sequence ID" value="QNP12943.1"/>
    <property type="molecule type" value="Genomic_DNA"/>
</dbReference>
<dbReference type="RefSeq" id="NP_536500.1">
    <property type="nucleotide sequence ID" value="NC_003310.1"/>
</dbReference>
<dbReference type="RefSeq" id="YP_010377070.1">
    <property type="nucleotide sequence ID" value="NC_063383.1"/>
</dbReference>
<dbReference type="SMR" id="M1L502"/>
<dbReference type="GeneID" id="72551483"/>
<dbReference type="GeneID" id="928880"/>
<dbReference type="KEGG" id="vg:928880"/>
<dbReference type="Proteomes" id="UP000516359">
    <property type="component" value="Genome"/>
</dbReference>
<dbReference type="GO" id="GO:0030430">
    <property type="term" value="C:host cell cytoplasm"/>
    <property type="evidence" value="ECO:0007669"/>
    <property type="project" value="UniProtKB-SubCell"/>
</dbReference>
<dbReference type="Gene3D" id="3.40.30.10">
    <property type="entry name" value="Glutaredoxin"/>
    <property type="match status" value="1"/>
</dbReference>
<dbReference type="InterPro" id="IPR008554">
    <property type="entry name" value="Glutaredoxin-like"/>
</dbReference>
<dbReference type="InterPro" id="IPR036249">
    <property type="entry name" value="Thioredoxin-like_sf"/>
</dbReference>
<dbReference type="Pfam" id="PF05768">
    <property type="entry name" value="Glrx-like"/>
    <property type="match status" value="1"/>
</dbReference>
<dbReference type="SUPFAM" id="SSF52833">
    <property type="entry name" value="Thioredoxin-like"/>
    <property type="match status" value="1"/>
</dbReference>
<reference key="1">
    <citation type="journal article" date="2013" name="Am. J. Trop. Med. Hyg.">
        <title>Detection of human monkeypox in the republic of the congo following intensive community education.</title>
        <authorList>
            <person name="Reynolds M.G."/>
            <person name="Emerson G.L."/>
            <person name="Pukuta E."/>
            <person name="Karhemere S."/>
            <person name="Muyembe J.J."/>
            <person name="Bikindou A."/>
            <person name="McCollum A.M."/>
            <person name="Moses C."/>
            <person name="Wilkins K."/>
            <person name="Zhao H."/>
            <person name="Damon I.K."/>
            <person name="Karem K.L."/>
            <person name="Li Y."/>
            <person name="Carroll D.S."/>
            <person name="Mombouli J.V."/>
        </authorList>
    </citation>
    <scope>NUCLEOTIDE SEQUENCE</scope>
    <source>
        <strain>ROC2010</strain>
    </source>
</reference>
<reference key="2">
    <citation type="journal article" date="2022" name="J. Infect. Dis.">
        <title>Exportation of Monkeypox virus from the African continent.</title>
        <authorList>
            <person name="Mauldin M.R."/>
            <person name="McCollum A.M."/>
            <person name="Nakazawa Y.J."/>
            <person name="Mandra A."/>
            <person name="Whitehouse E.R."/>
            <person name="Davidson W."/>
            <person name="Zhao H."/>
            <person name="Gao J."/>
            <person name="Li Y."/>
            <person name="Doty J."/>
            <person name="Yinka-Ogunleye A."/>
            <person name="Akinpelu A."/>
            <person name="Aruna O."/>
            <person name="Naidoo D."/>
            <person name="Lewandowski K."/>
            <person name="Afrough B."/>
            <person name="Graham V."/>
            <person name="Aarons E."/>
            <person name="Hewson R."/>
            <person name="Vipond R."/>
            <person name="Dunning J."/>
            <person name="Chand M."/>
            <person name="Brown C."/>
            <person name="Cohen-Gihon I."/>
            <person name="Erez N."/>
            <person name="Shifman O."/>
            <person name="Israeli O."/>
            <person name="Sharon M."/>
            <person name="Schwartz E."/>
            <person name="Beth-Din A."/>
            <person name="Zvi A."/>
            <person name="Mak T.M."/>
            <person name="Ng Y.K."/>
            <person name="Cui L."/>
            <person name="Lin R.T.P."/>
            <person name="Olson V.A."/>
            <person name="Brooks T."/>
            <person name="Paran N."/>
            <person name="Ihekweazu C."/>
            <person name="Reynolds M.G."/>
        </authorList>
    </citation>
    <scope>NUCLEOTIDE SEQUENCE [LARGE SCALE GENOMIC DNA]</scope>
    <source>
        <strain>MPXV-M5312_HM12_Rivers</strain>
    </source>
</reference>
<evidence type="ECO:0000250" key="1">
    <source>
        <dbReference type="UniProtKB" id="P68460"/>
    </source>
</evidence>
<evidence type="ECO:0000305" key="2"/>
<name>GLRX2_MONPV</name>
<protein>
    <recommendedName>
        <fullName>Glutaredoxin-2</fullName>
    </recommendedName>
</protein>